<reference key="1">
    <citation type="journal article" date="2000" name="Science">
        <title>The genome sequence of Drosophila melanogaster.</title>
        <authorList>
            <person name="Adams M.D."/>
            <person name="Celniker S.E."/>
            <person name="Holt R.A."/>
            <person name="Evans C.A."/>
            <person name="Gocayne J.D."/>
            <person name="Amanatides P.G."/>
            <person name="Scherer S.E."/>
            <person name="Li P.W."/>
            <person name="Hoskins R.A."/>
            <person name="Galle R.F."/>
            <person name="George R.A."/>
            <person name="Lewis S.E."/>
            <person name="Richards S."/>
            <person name="Ashburner M."/>
            <person name="Henderson S.N."/>
            <person name="Sutton G.G."/>
            <person name="Wortman J.R."/>
            <person name="Yandell M.D."/>
            <person name="Zhang Q."/>
            <person name="Chen L.X."/>
            <person name="Brandon R.C."/>
            <person name="Rogers Y.-H.C."/>
            <person name="Blazej R.G."/>
            <person name="Champe M."/>
            <person name="Pfeiffer B.D."/>
            <person name="Wan K.H."/>
            <person name="Doyle C."/>
            <person name="Baxter E.G."/>
            <person name="Helt G."/>
            <person name="Nelson C.R."/>
            <person name="Miklos G.L.G."/>
            <person name="Abril J.F."/>
            <person name="Agbayani A."/>
            <person name="An H.-J."/>
            <person name="Andrews-Pfannkoch C."/>
            <person name="Baldwin D."/>
            <person name="Ballew R.M."/>
            <person name="Basu A."/>
            <person name="Baxendale J."/>
            <person name="Bayraktaroglu L."/>
            <person name="Beasley E.M."/>
            <person name="Beeson K.Y."/>
            <person name="Benos P.V."/>
            <person name="Berman B.P."/>
            <person name="Bhandari D."/>
            <person name="Bolshakov S."/>
            <person name="Borkova D."/>
            <person name="Botchan M.R."/>
            <person name="Bouck J."/>
            <person name="Brokstein P."/>
            <person name="Brottier P."/>
            <person name="Burtis K.C."/>
            <person name="Busam D.A."/>
            <person name="Butler H."/>
            <person name="Cadieu E."/>
            <person name="Center A."/>
            <person name="Chandra I."/>
            <person name="Cherry J.M."/>
            <person name="Cawley S."/>
            <person name="Dahlke C."/>
            <person name="Davenport L.B."/>
            <person name="Davies P."/>
            <person name="de Pablos B."/>
            <person name="Delcher A."/>
            <person name="Deng Z."/>
            <person name="Mays A.D."/>
            <person name="Dew I."/>
            <person name="Dietz S.M."/>
            <person name="Dodson K."/>
            <person name="Doup L.E."/>
            <person name="Downes M."/>
            <person name="Dugan-Rocha S."/>
            <person name="Dunkov B.C."/>
            <person name="Dunn P."/>
            <person name="Durbin K.J."/>
            <person name="Evangelista C.C."/>
            <person name="Ferraz C."/>
            <person name="Ferriera S."/>
            <person name="Fleischmann W."/>
            <person name="Fosler C."/>
            <person name="Gabrielian A.E."/>
            <person name="Garg N.S."/>
            <person name="Gelbart W.M."/>
            <person name="Glasser K."/>
            <person name="Glodek A."/>
            <person name="Gong F."/>
            <person name="Gorrell J.H."/>
            <person name="Gu Z."/>
            <person name="Guan P."/>
            <person name="Harris M."/>
            <person name="Harris N.L."/>
            <person name="Harvey D.A."/>
            <person name="Heiman T.J."/>
            <person name="Hernandez J.R."/>
            <person name="Houck J."/>
            <person name="Hostin D."/>
            <person name="Houston K.A."/>
            <person name="Howland T.J."/>
            <person name="Wei M.-H."/>
            <person name="Ibegwam C."/>
            <person name="Jalali M."/>
            <person name="Kalush F."/>
            <person name="Karpen G.H."/>
            <person name="Ke Z."/>
            <person name="Kennison J.A."/>
            <person name="Ketchum K.A."/>
            <person name="Kimmel B.E."/>
            <person name="Kodira C.D."/>
            <person name="Kraft C.L."/>
            <person name="Kravitz S."/>
            <person name="Kulp D."/>
            <person name="Lai Z."/>
            <person name="Lasko P."/>
            <person name="Lei Y."/>
            <person name="Levitsky A.A."/>
            <person name="Li J.H."/>
            <person name="Li Z."/>
            <person name="Liang Y."/>
            <person name="Lin X."/>
            <person name="Liu X."/>
            <person name="Mattei B."/>
            <person name="McIntosh T.C."/>
            <person name="McLeod M.P."/>
            <person name="McPherson D."/>
            <person name="Merkulov G."/>
            <person name="Milshina N.V."/>
            <person name="Mobarry C."/>
            <person name="Morris J."/>
            <person name="Moshrefi A."/>
            <person name="Mount S.M."/>
            <person name="Moy M."/>
            <person name="Murphy B."/>
            <person name="Murphy L."/>
            <person name="Muzny D.M."/>
            <person name="Nelson D.L."/>
            <person name="Nelson D.R."/>
            <person name="Nelson K.A."/>
            <person name="Nixon K."/>
            <person name="Nusskern D.R."/>
            <person name="Pacleb J.M."/>
            <person name="Palazzolo M."/>
            <person name="Pittman G.S."/>
            <person name="Pan S."/>
            <person name="Pollard J."/>
            <person name="Puri V."/>
            <person name="Reese M.G."/>
            <person name="Reinert K."/>
            <person name="Remington K."/>
            <person name="Saunders R.D.C."/>
            <person name="Scheeler F."/>
            <person name="Shen H."/>
            <person name="Shue B.C."/>
            <person name="Siden-Kiamos I."/>
            <person name="Simpson M."/>
            <person name="Skupski M.P."/>
            <person name="Smith T.J."/>
            <person name="Spier E."/>
            <person name="Spradling A.C."/>
            <person name="Stapleton M."/>
            <person name="Strong R."/>
            <person name="Sun E."/>
            <person name="Svirskas R."/>
            <person name="Tector C."/>
            <person name="Turner R."/>
            <person name="Venter E."/>
            <person name="Wang A.H."/>
            <person name="Wang X."/>
            <person name="Wang Z.-Y."/>
            <person name="Wassarman D.A."/>
            <person name="Weinstock G.M."/>
            <person name="Weissenbach J."/>
            <person name="Williams S.M."/>
            <person name="Woodage T."/>
            <person name="Worley K.C."/>
            <person name="Wu D."/>
            <person name="Yang S."/>
            <person name="Yao Q.A."/>
            <person name="Ye J."/>
            <person name="Yeh R.-F."/>
            <person name="Zaveri J.S."/>
            <person name="Zhan M."/>
            <person name="Zhang G."/>
            <person name="Zhao Q."/>
            <person name="Zheng L."/>
            <person name="Zheng X.H."/>
            <person name="Zhong F.N."/>
            <person name="Zhong W."/>
            <person name="Zhou X."/>
            <person name="Zhu S.C."/>
            <person name="Zhu X."/>
            <person name="Smith H.O."/>
            <person name="Gibbs R.A."/>
            <person name="Myers E.W."/>
            <person name="Rubin G.M."/>
            <person name="Venter J.C."/>
        </authorList>
    </citation>
    <scope>NUCLEOTIDE SEQUENCE [LARGE SCALE GENOMIC DNA]</scope>
    <source>
        <strain>Berkeley</strain>
    </source>
</reference>
<reference key="2">
    <citation type="journal article" date="2002" name="Genome Biol.">
        <title>Annotation of the Drosophila melanogaster euchromatic genome: a systematic review.</title>
        <authorList>
            <person name="Misra S."/>
            <person name="Crosby M.A."/>
            <person name="Mungall C.J."/>
            <person name="Matthews B.B."/>
            <person name="Campbell K.S."/>
            <person name="Hradecky P."/>
            <person name="Huang Y."/>
            <person name="Kaminker J.S."/>
            <person name="Millburn G.H."/>
            <person name="Prochnik S.E."/>
            <person name="Smith C.D."/>
            <person name="Tupy J.L."/>
            <person name="Whitfield E.J."/>
            <person name="Bayraktaroglu L."/>
            <person name="Berman B.P."/>
            <person name="Bettencourt B.R."/>
            <person name="Celniker S.E."/>
            <person name="de Grey A.D.N.J."/>
            <person name="Drysdale R.A."/>
            <person name="Harris N.L."/>
            <person name="Richter J."/>
            <person name="Russo S."/>
            <person name="Schroeder A.J."/>
            <person name="Shu S.Q."/>
            <person name="Stapleton M."/>
            <person name="Yamada C."/>
            <person name="Ashburner M."/>
            <person name="Gelbart W.M."/>
            <person name="Rubin G.M."/>
            <person name="Lewis S.E."/>
        </authorList>
    </citation>
    <scope>GENOME REANNOTATION</scope>
    <source>
        <strain>Berkeley</strain>
    </source>
</reference>
<organism>
    <name type="scientific">Drosophila melanogaster</name>
    <name type="common">Fruit fly</name>
    <dbReference type="NCBI Taxonomy" id="7227"/>
    <lineage>
        <taxon>Eukaryota</taxon>
        <taxon>Metazoa</taxon>
        <taxon>Ecdysozoa</taxon>
        <taxon>Arthropoda</taxon>
        <taxon>Hexapoda</taxon>
        <taxon>Insecta</taxon>
        <taxon>Pterygota</taxon>
        <taxon>Neoptera</taxon>
        <taxon>Endopterygota</taxon>
        <taxon>Diptera</taxon>
        <taxon>Brachycera</taxon>
        <taxon>Muscomorpha</taxon>
        <taxon>Ephydroidea</taxon>
        <taxon>Drosophilidae</taxon>
        <taxon>Drosophila</taxon>
        <taxon>Sophophora</taxon>
    </lineage>
</organism>
<dbReference type="EMBL" id="AE014296">
    <property type="protein sequence ID" value="AAF47523.1"/>
    <property type="molecule type" value="Genomic_DNA"/>
</dbReference>
<dbReference type="RefSeq" id="NP_647633.1">
    <property type="nucleotide sequence ID" value="NM_139376.4"/>
</dbReference>
<dbReference type="SMR" id="Q9W0C7"/>
<dbReference type="BioGRID" id="63726">
    <property type="interactions" value="1"/>
</dbReference>
<dbReference type="FunCoup" id="Q9W0C7">
    <property type="interactions" value="1785"/>
</dbReference>
<dbReference type="STRING" id="7227.FBpp0072703"/>
<dbReference type="PaxDb" id="7227-FBpp0072703"/>
<dbReference type="EnsemblMetazoa" id="FBtr0072823">
    <property type="protein sequence ID" value="FBpp0072703"/>
    <property type="gene ID" value="FBgn0035243"/>
</dbReference>
<dbReference type="GeneID" id="38192"/>
<dbReference type="KEGG" id="dme:Dmel_CG13926"/>
<dbReference type="UCSC" id="CG13926-RA">
    <property type="organism name" value="d. melanogaster"/>
</dbReference>
<dbReference type="AGR" id="FB:FBgn0035243"/>
<dbReference type="FlyBase" id="FBgn0035243">
    <property type="gene designation" value="CG13926"/>
</dbReference>
<dbReference type="VEuPathDB" id="VectorBase:FBgn0035243"/>
<dbReference type="eggNOG" id="KOG4067">
    <property type="taxonomic scope" value="Eukaryota"/>
</dbReference>
<dbReference type="GeneTree" id="ENSGT00390000004056"/>
<dbReference type="HOGENOM" id="CLU_084839_0_0_1"/>
<dbReference type="InParanoid" id="Q9W0C7"/>
<dbReference type="OMA" id="WWAKFER"/>
<dbReference type="OrthoDB" id="10248398at2759"/>
<dbReference type="PhylomeDB" id="Q9W0C7"/>
<dbReference type="BioGRID-ORCS" id="38192">
    <property type="hits" value="1 hit in 1 CRISPR screen"/>
</dbReference>
<dbReference type="GenomeRNAi" id="38192"/>
<dbReference type="PRO" id="PR:Q9W0C7"/>
<dbReference type="Proteomes" id="UP000000803">
    <property type="component" value="Chromosome 3L"/>
</dbReference>
<dbReference type="Bgee" id="FBgn0035243">
    <property type="expression patterns" value="Expressed in T neuron T4a (Drosophila) in embryonic/larval optic lobe (Drosophila) and 58 other cell types or tissues"/>
</dbReference>
<dbReference type="ExpressionAtlas" id="Q9W0C7">
    <property type="expression patterns" value="baseline and differential"/>
</dbReference>
<dbReference type="GO" id="GO:0005829">
    <property type="term" value="C:cytosol"/>
    <property type="evidence" value="ECO:0000318"/>
    <property type="project" value="GO_Central"/>
</dbReference>
<dbReference type="GO" id="GO:0005634">
    <property type="term" value="C:nucleus"/>
    <property type="evidence" value="ECO:0000318"/>
    <property type="project" value="GO_Central"/>
</dbReference>
<dbReference type="GO" id="GO:0030544">
    <property type="term" value="F:Hsp70 protein binding"/>
    <property type="evidence" value="ECO:0000318"/>
    <property type="project" value="GO_Central"/>
</dbReference>
<dbReference type="GO" id="GO:0061608">
    <property type="term" value="F:nuclear import signal receptor activity"/>
    <property type="evidence" value="ECO:0000318"/>
    <property type="project" value="GO_Central"/>
</dbReference>
<dbReference type="GO" id="GO:0006606">
    <property type="term" value="P:protein import into nucleus"/>
    <property type="evidence" value="ECO:0000318"/>
    <property type="project" value="GO_Central"/>
</dbReference>
<dbReference type="InterPro" id="IPR048364">
    <property type="entry name" value="Hikeshi-like_C"/>
</dbReference>
<dbReference type="InterPro" id="IPR008493">
    <property type="entry name" value="Hikeshi-like_N"/>
</dbReference>
<dbReference type="InterPro" id="IPR031318">
    <property type="entry name" value="OPI10"/>
</dbReference>
<dbReference type="PANTHER" id="PTHR12925">
    <property type="entry name" value="HIKESHI FAMILY MEMBER"/>
    <property type="match status" value="1"/>
</dbReference>
<dbReference type="PANTHER" id="PTHR12925:SF0">
    <property type="entry name" value="PROTEIN HIKESHI"/>
    <property type="match status" value="1"/>
</dbReference>
<dbReference type="Pfam" id="PF21057">
    <property type="entry name" value="Hikeshi-like_C"/>
    <property type="match status" value="1"/>
</dbReference>
<dbReference type="Pfam" id="PF05603">
    <property type="entry name" value="Hikeshi-like_N"/>
    <property type="match status" value="1"/>
</dbReference>
<name>OPI10_DROME</name>
<keyword id="KW-1185">Reference proteome</keyword>
<sequence>MSLFGLIVSGRLPQSDFVAVDATKLLVNVPDIESVNYLVVFLTGVSPLPVGTSAAIYFSWPDANAAPTWQYLGHINNTKPSAIFKIAQLKKSHELEAQAHGMVFGSQEISHIAQIGVSLEPELTVAQQTPAVSTANDNKQFGQRMLENFFNYASSFGVAARDIPPISSETFVPFSVVQNWYTNFQRRMEQNPNFWKY</sequence>
<comment type="similarity">
    <text evidence="1">Belongs to the OPI10 family.</text>
</comment>
<accession>Q9W0C7</accession>
<gene>
    <name type="ORF">CG13926</name>
</gene>
<proteinExistence type="inferred from homology"/>
<protein>
    <recommendedName>
        <fullName>Protein OPI10 homolog</fullName>
    </recommendedName>
</protein>
<feature type="chain" id="PRO_0000328391" description="Protein OPI10 homolog">
    <location>
        <begin position="1"/>
        <end position="197"/>
    </location>
</feature>
<evidence type="ECO:0000305" key="1"/>